<proteinExistence type="inferred from homology"/>
<feature type="chain" id="PRO_1000165081" description="HPr kinase/phosphorylase">
    <location>
        <begin position="1"/>
        <end position="311"/>
    </location>
</feature>
<feature type="region of interest" description="Important for the catalytic mechanism of both phosphorylation and dephosphorylation" evidence="1">
    <location>
        <begin position="201"/>
        <end position="210"/>
    </location>
</feature>
<feature type="region of interest" description="Important for the catalytic mechanism of dephosphorylation" evidence="1">
    <location>
        <begin position="264"/>
        <end position="269"/>
    </location>
</feature>
<feature type="active site" evidence="1">
    <location>
        <position position="138"/>
    </location>
</feature>
<feature type="active site" evidence="1">
    <location>
        <position position="159"/>
    </location>
</feature>
<feature type="active site" description="Proton acceptor; for phosphorylation activity. Proton donor; for dephosphorylation activity" evidence="1">
    <location>
        <position position="177"/>
    </location>
</feature>
<feature type="active site" evidence="1">
    <location>
        <position position="243"/>
    </location>
</feature>
<feature type="binding site" evidence="1">
    <location>
        <begin position="153"/>
        <end position="160"/>
    </location>
    <ligand>
        <name>ATP</name>
        <dbReference type="ChEBI" id="CHEBI:30616"/>
    </ligand>
</feature>
<feature type="binding site" evidence="1">
    <location>
        <position position="160"/>
    </location>
    <ligand>
        <name>Mg(2+)</name>
        <dbReference type="ChEBI" id="CHEBI:18420"/>
    </ligand>
</feature>
<feature type="binding site" evidence="1">
    <location>
        <position position="202"/>
    </location>
    <ligand>
        <name>Mg(2+)</name>
        <dbReference type="ChEBI" id="CHEBI:18420"/>
    </ligand>
</feature>
<protein>
    <recommendedName>
        <fullName evidence="1">HPr kinase/phosphorylase</fullName>
        <shortName evidence="1">HPrK/P</shortName>
        <ecNumber evidence="1">2.7.11.-</ecNumber>
        <ecNumber evidence="1">2.7.4.-</ecNumber>
    </recommendedName>
    <alternativeName>
        <fullName evidence="1">HPr(Ser) kinase/phosphorylase</fullName>
    </alternativeName>
</protein>
<sequence>MSVLVKEVIEKLRLDIVYGEPELLEKEINTADITRPGLEMTGYFDYYTPERIQLLGMKEWSYLISMPSNSRYEVLKKMFLPETPAVIVARGLVVPEEMLKAARECKIAILTSRAATSRLSGELSSYLDSRLAERTSVHGVLMDIYGMGVLIQGDSGIGKSETGLELVKRGHRLVADDRVDIFAKDEITLWGEPAEILKHLIEIRGVGIIDVMSLYGASAVKDSSQVQLAVYLENYDTHKTFDRLGNNAEELEVSGVAIPRIRIPVKTGRNISVVIEAAAMNYRAKEMGFDATRLFDERLTSLIARNEVQNA</sequence>
<reference key="1">
    <citation type="journal article" date="2010" name="Genome Biol.">
        <title>Structure and dynamics of the pan-genome of Streptococcus pneumoniae and closely related species.</title>
        <authorList>
            <person name="Donati C."/>
            <person name="Hiller N.L."/>
            <person name="Tettelin H."/>
            <person name="Muzzi A."/>
            <person name="Croucher N.J."/>
            <person name="Angiuoli S.V."/>
            <person name="Oggioni M."/>
            <person name="Dunning Hotopp J.C."/>
            <person name="Hu F.Z."/>
            <person name="Riley D.R."/>
            <person name="Covacci A."/>
            <person name="Mitchell T.J."/>
            <person name="Bentley S.D."/>
            <person name="Kilian M."/>
            <person name="Ehrlich G.D."/>
            <person name="Rappuoli R."/>
            <person name="Moxon E.R."/>
            <person name="Masignani V."/>
        </authorList>
    </citation>
    <scope>NUCLEOTIDE SEQUENCE [LARGE SCALE GENOMIC DNA]</scope>
    <source>
        <strain>Taiwan19F-14</strain>
    </source>
</reference>
<comment type="function">
    <text evidence="1">Catalyzes the ATP- as well as the pyrophosphate-dependent phosphorylation of a specific serine residue in HPr, a phosphocarrier protein of the phosphoenolpyruvate-dependent sugar phosphotransferase system (PTS). HprK/P also catalyzes the pyrophosphate-producing, inorganic phosphate-dependent dephosphorylation (phosphorolysis) of seryl-phosphorylated HPr (P-Ser-HPr). The two antagonistic activities of HprK/P are regulated by several intracellular metabolites, which change their concentration in response to the absence or presence of rapidly metabolisable carbon sources (glucose, fructose, etc.) in the growth medium. Therefore, by controlling the phosphorylation state of HPr, HPrK/P is a sensor enzyme that plays a major role in the regulation of carbon metabolism and sugar transport: it mediates carbon catabolite repression (CCR), and regulates PTS-catalyzed carbohydrate uptake and inducer exclusion.</text>
</comment>
<comment type="catalytic activity">
    <reaction evidence="1">
        <text>[HPr protein]-L-serine + ATP = [HPr protein]-O-phospho-L-serine + ADP + H(+)</text>
        <dbReference type="Rhea" id="RHEA:46600"/>
        <dbReference type="Rhea" id="RHEA-COMP:11602"/>
        <dbReference type="Rhea" id="RHEA-COMP:11603"/>
        <dbReference type="ChEBI" id="CHEBI:15378"/>
        <dbReference type="ChEBI" id="CHEBI:29999"/>
        <dbReference type="ChEBI" id="CHEBI:30616"/>
        <dbReference type="ChEBI" id="CHEBI:83421"/>
        <dbReference type="ChEBI" id="CHEBI:456216"/>
    </reaction>
</comment>
<comment type="catalytic activity">
    <reaction evidence="1">
        <text>[HPr protein]-O-phospho-L-serine + phosphate + H(+) = [HPr protein]-L-serine + diphosphate</text>
        <dbReference type="Rhea" id="RHEA:46604"/>
        <dbReference type="Rhea" id="RHEA-COMP:11602"/>
        <dbReference type="Rhea" id="RHEA-COMP:11603"/>
        <dbReference type="ChEBI" id="CHEBI:15378"/>
        <dbReference type="ChEBI" id="CHEBI:29999"/>
        <dbReference type="ChEBI" id="CHEBI:33019"/>
        <dbReference type="ChEBI" id="CHEBI:43474"/>
        <dbReference type="ChEBI" id="CHEBI:83421"/>
    </reaction>
</comment>
<comment type="cofactor">
    <cofactor evidence="1">
        <name>Mg(2+)</name>
        <dbReference type="ChEBI" id="CHEBI:18420"/>
    </cofactor>
</comment>
<comment type="subunit">
    <text evidence="1">Homohexamer.</text>
</comment>
<comment type="domain">
    <text evidence="1">The Walker A ATP-binding motif also binds Pi and PPi.</text>
</comment>
<comment type="miscellaneous">
    <text evidence="1">Both phosphorylation and phosphorolysis are carried out by the same active site and suggest a common mechanism for both reactions.</text>
</comment>
<comment type="similarity">
    <text evidence="1">Belongs to the HPrK/P family.</text>
</comment>
<accession>C1CQU4</accession>
<evidence type="ECO:0000255" key="1">
    <source>
        <dbReference type="HAMAP-Rule" id="MF_01249"/>
    </source>
</evidence>
<name>HPRK_STRZT</name>
<dbReference type="EC" id="2.7.11.-" evidence="1"/>
<dbReference type="EC" id="2.7.4.-" evidence="1"/>
<dbReference type="EMBL" id="CP000921">
    <property type="protein sequence ID" value="ACO24261.1"/>
    <property type="molecule type" value="Genomic_DNA"/>
</dbReference>
<dbReference type="RefSeq" id="WP_000115143.1">
    <property type="nucleotide sequence ID" value="NC_012469.1"/>
</dbReference>
<dbReference type="SMR" id="C1CQU4"/>
<dbReference type="KEGG" id="snt:SPT_0861"/>
<dbReference type="HOGENOM" id="CLU_052030_0_1_9"/>
<dbReference type="GO" id="GO:0005524">
    <property type="term" value="F:ATP binding"/>
    <property type="evidence" value="ECO:0007669"/>
    <property type="project" value="UniProtKB-UniRule"/>
</dbReference>
<dbReference type="GO" id="GO:0000287">
    <property type="term" value="F:magnesium ion binding"/>
    <property type="evidence" value="ECO:0007669"/>
    <property type="project" value="UniProtKB-UniRule"/>
</dbReference>
<dbReference type="GO" id="GO:0000155">
    <property type="term" value="F:phosphorelay sensor kinase activity"/>
    <property type="evidence" value="ECO:0007669"/>
    <property type="project" value="InterPro"/>
</dbReference>
<dbReference type="GO" id="GO:0004674">
    <property type="term" value="F:protein serine/threonine kinase activity"/>
    <property type="evidence" value="ECO:0007669"/>
    <property type="project" value="UniProtKB-KW"/>
</dbReference>
<dbReference type="GO" id="GO:0004712">
    <property type="term" value="F:protein serine/threonine/tyrosine kinase activity"/>
    <property type="evidence" value="ECO:0007669"/>
    <property type="project" value="UniProtKB-UniRule"/>
</dbReference>
<dbReference type="GO" id="GO:0006109">
    <property type="term" value="P:regulation of carbohydrate metabolic process"/>
    <property type="evidence" value="ECO:0007669"/>
    <property type="project" value="UniProtKB-UniRule"/>
</dbReference>
<dbReference type="CDD" id="cd01918">
    <property type="entry name" value="HprK_C"/>
    <property type="match status" value="1"/>
</dbReference>
<dbReference type="FunFam" id="3.40.1390.20:FF:000005">
    <property type="entry name" value="HPr kinase/phosphorylase"/>
    <property type="match status" value="1"/>
</dbReference>
<dbReference type="FunFam" id="3.40.50.300:FF:000174">
    <property type="entry name" value="HPr kinase/phosphorylase"/>
    <property type="match status" value="1"/>
</dbReference>
<dbReference type="Gene3D" id="3.40.1390.20">
    <property type="entry name" value="HprK N-terminal domain-like"/>
    <property type="match status" value="1"/>
</dbReference>
<dbReference type="Gene3D" id="3.40.50.300">
    <property type="entry name" value="P-loop containing nucleotide triphosphate hydrolases"/>
    <property type="match status" value="1"/>
</dbReference>
<dbReference type="HAMAP" id="MF_01249">
    <property type="entry name" value="HPr_kinase"/>
    <property type="match status" value="1"/>
</dbReference>
<dbReference type="InterPro" id="IPR003755">
    <property type="entry name" value="HPr(Ser)_kin/Pase"/>
</dbReference>
<dbReference type="InterPro" id="IPR011104">
    <property type="entry name" value="Hpr_kin/Pase_C"/>
</dbReference>
<dbReference type="InterPro" id="IPR011126">
    <property type="entry name" value="Hpr_kin/Pase_Hpr_N"/>
</dbReference>
<dbReference type="InterPro" id="IPR027417">
    <property type="entry name" value="P-loop_NTPase"/>
</dbReference>
<dbReference type="InterPro" id="IPR028979">
    <property type="entry name" value="Ser_kin/Pase_Hpr-like_N_sf"/>
</dbReference>
<dbReference type="NCBIfam" id="TIGR00679">
    <property type="entry name" value="hpr-ser"/>
    <property type="match status" value="1"/>
</dbReference>
<dbReference type="PANTHER" id="PTHR30305:SF1">
    <property type="entry name" value="HPR KINASE_PHOSPHORYLASE"/>
    <property type="match status" value="1"/>
</dbReference>
<dbReference type="PANTHER" id="PTHR30305">
    <property type="entry name" value="PROTEIN YJDM-RELATED"/>
    <property type="match status" value="1"/>
</dbReference>
<dbReference type="Pfam" id="PF07475">
    <property type="entry name" value="Hpr_kinase_C"/>
    <property type="match status" value="1"/>
</dbReference>
<dbReference type="Pfam" id="PF02603">
    <property type="entry name" value="Hpr_kinase_N"/>
    <property type="match status" value="1"/>
</dbReference>
<dbReference type="SUPFAM" id="SSF75138">
    <property type="entry name" value="HprK N-terminal domain-like"/>
    <property type="match status" value="1"/>
</dbReference>
<dbReference type="SUPFAM" id="SSF53795">
    <property type="entry name" value="PEP carboxykinase-like"/>
    <property type="match status" value="1"/>
</dbReference>
<gene>
    <name evidence="1" type="primary">hprK</name>
    <name type="ordered locus">SPT_0861</name>
</gene>
<organism>
    <name type="scientific">Streptococcus pneumoniae (strain Taiwan19F-14)</name>
    <dbReference type="NCBI Taxonomy" id="487213"/>
    <lineage>
        <taxon>Bacteria</taxon>
        <taxon>Bacillati</taxon>
        <taxon>Bacillota</taxon>
        <taxon>Bacilli</taxon>
        <taxon>Lactobacillales</taxon>
        <taxon>Streptococcaceae</taxon>
        <taxon>Streptococcus</taxon>
    </lineage>
</organism>
<keyword id="KW-0067">ATP-binding</keyword>
<keyword id="KW-0119">Carbohydrate metabolism</keyword>
<keyword id="KW-0418">Kinase</keyword>
<keyword id="KW-0460">Magnesium</keyword>
<keyword id="KW-0479">Metal-binding</keyword>
<keyword id="KW-0511">Multifunctional enzyme</keyword>
<keyword id="KW-0547">Nucleotide-binding</keyword>
<keyword id="KW-0723">Serine/threonine-protein kinase</keyword>
<keyword id="KW-0808">Transferase</keyword>